<organism>
    <name type="scientific">Homo sapiens</name>
    <name type="common">Human</name>
    <dbReference type="NCBI Taxonomy" id="9606"/>
    <lineage>
        <taxon>Eukaryota</taxon>
        <taxon>Metazoa</taxon>
        <taxon>Chordata</taxon>
        <taxon>Craniata</taxon>
        <taxon>Vertebrata</taxon>
        <taxon>Euteleostomi</taxon>
        <taxon>Mammalia</taxon>
        <taxon>Eutheria</taxon>
        <taxon>Euarchontoglires</taxon>
        <taxon>Primates</taxon>
        <taxon>Haplorrhini</taxon>
        <taxon>Catarrhini</taxon>
        <taxon>Hominidae</taxon>
        <taxon>Homo</taxon>
    </lineage>
</organism>
<comment type="function">
    <text evidence="8">Cadherins are calcium-dependent cell adhesion proteins. They preferentially interact with themselves in a homophilic manner in connecting cells; cadherins may thus contribute to the sorting of heterogeneous cell types. Required for proper focal adhesion assembly (PubMed:33811546). Involved in the regulation of cell migration (PubMed:33811546).</text>
</comment>
<comment type="subunit">
    <text evidence="1">Interacts with PCDH8.</text>
</comment>
<comment type="subcellular location">
    <subcellularLocation>
        <location>Cell membrane</location>
        <topology>Single-pass type I membrane protein</topology>
    </subcellularLocation>
</comment>
<comment type="alternative products">
    <event type="alternative splicing"/>
    <isoform>
        <id>P55287-1</id>
        <name>1</name>
        <sequence type="displayed"/>
    </isoform>
    <isoform>
        <id>P55287-2</id>
        <name>2</name>
        <sequence type="described" ref="VSP_000640 VSP_000641"/>
    </isoform>
</comment>
<comment type="tissue specificity">
    <text evidence="8">Expressed mainly in brain but also found in other tissues. Expressed in neuroblasts. In the embryo from 67 to 72 days of gestation, detected at high levels in facial mesenchyme including the central palatal mesenchyme, dental mesenchyme, the eye and optic muscle, and the tongue (at protein level) (PubMed:33811546).</text>
</comment>
<comment type="domain">
    <text evidence="1">Three calcium ions are usually bound at the interface of each cadherin domain and rigidify the connections, imparting a strong curvature to the full-length ectodomain.</text>
</comment>
<comment type="disease">
    <text>A chromosomal aberration involving CDH11 is a common genetic feature of aneurysmal bone cyst, a benign osseous neoplasm. Translocation t(16;17)(q22;p13) with USP6. The translocation generates a fusion gene in which the strong CDH11 promoter is fused to the entire USP6 coding sequence, resulting in USP6 transcriptional up-regulation.</text>
</comment>
<comment type="disease" evidence="6 7">
    <disease id="DI-05231">
        <name>Elsahy-Waters syndrome</name>
        <acronym>ESWS</acronym>
        <description>An autosomal recessive syndrome characterized by moderate intellectual disability, hypospadias and characteristic craniofacial morphology, which includes brachycephaly, facial asymmetry, exotropia, hypertelorism, telechantus, broad nose, concave nasal ridge, underdeveloped mid-face, prognathism, and radicular dentin dysplasia.</description>
        <dbReference type="MIM" id="211380"/>
    </disease>
    <text>The disease is caused by variants affecting the gene represented in this entry.</text>
</comment>
<comment type="disease" evidence="8">
    <disease id="DI-06331">
        <name>Teebi hypertelorism syndrome 2</name>
        <acronym>TBHS2</acronym>
        <description>A form of Teebi hypertelorism syndrome, a syndrome characterized by an abnormally increased distance between ocular orbits, and facial features that can resemble craniofrontonasal dysplasia such as prominent forehead, widow's peak, heavy and broad eyebrows, long palpebral fissures, ptosis, high and broad nasal bridge, short nose, low-set ears, natal teeth, thin upper lip and a grooved chin. Some affected individuals have limb, urogenital, umbilical and cardiac defects. Developmental delay and/or impaired intellectual development have been observed in some patients. TBHS2 inheritance is autosomal dominant.</description>
        <dbReference type="MIM" id="619736"/>
    </disease>
    <text>The disease is caused by variants affecting the gene represented in this entry.</text>
</comment>
<gene>
    <name type="primary">CDH11</name>
</gene>
<protein>
    <recommendedName>
        <fullName>Cadherin-11</fullName>
    </recommendedName>
    <alternativeName>
        <fullName>OSF-4</fullName>
    </alternativeName>
    <alternativeName>
        <fullName>Osteoblast cadherin</fullName>
        <shortName>OB-cadherin</shortName>
    </alternativeName>
</protein>
<accession>P55287</accession>
<accession>A8K5D6</accession>
<accession>A8MZC8</accession>
<accession>B7WP28</accession>
<accession>Q15065</accession>
<accession>Q15066</accession>
<accession>Q9UQ93</accession>
<accession>Q9UQ94</accession>
<dbReference type="EMBL" id="L34056">
    <property type="protein sequence ID" value="AAA35622.1"/>
    <property type="molecule type" value="mRNA"/>
</dbReference>
<dbReference type="EMBL" id="D21254">
    <property type="protein sequence ID" value="BAA04798.1"/>
    <property type="molecule type" value="mRNA"/>
</dbReference>
<dbReference type="EMBL" id="D21255">
    <property type="protein sequence ID" value="BAA04799.1"/>
    <property type="molecule type" value="mRNA"/>
</dbReference>
<dbReference type="EMBL" id="AK291251">
    <property type="protein sequence ID" value="BAF83940.1"/>
    <property type="molecule type" value="mRNA"/>
</dbReference>
<dbReference type="EMBL" id="AC010533">
    <property type="status" value="NOT_ANNOTATED_CDS"/>
    <property type="molecule type" value="Genomic_DNA"/>
</dbReference>
<dbReference type="EMBL" id="AF060370">
    <property type="protein sequence ID" value="AAD27755.1"/>
    <property type="molecule type" value="Genomic_DNA"/>
</dbReference>
<dbReference type="EMBL" id="AF060369">
    <property type="protein sequence ID" value="AAD27755.1"/>
    <property type="status" value="JOINED"/>
    <property type="molecule type" value="Genomic_DNA"/>
</dbReference>
<dbReference type="EMBL" id="AF060370">
    <property type="protein sequence ID" value="AAD27756.1"/>
    <property type="molecule type" value="Genomic_DNA"/>
</dbReference>
<dbReference type="EMBL" id="AF060369">
    <property type="protein sequence ID" value="AAD27756.1"/>
    <property type="status" value="JOINED"/>
    <property type="molecule type" value="Genomic_DNA"/>
</dbReference>
<dbReference type="CCDS" id="CCDS10803.1">
    <molecule id="P55287-1"/>
</dbReference>
<dbReference type="CCDS" id="CCDS81993.1">
    <molecule id="P55287-2"/>
</dbReference>
<dbReference type="PIR" id="A38992">
    <property type="entry name" value="A38992"/>
</dbReference>
<dbReference type="RefSeq" id="NP_001295321.1">
    <molecule id="P55287-2"/>
    <property type="nucleotide sequence ID" value="NM_001308392.2"/>
</dbReference>
<dbReference type="RefSeq" id="NP_001788.2">
    <molecule id="P55287-1"/>
    <property type="nucleotide sequence ID" value="NM_001797.3"/>
</dbReference>
<dbReference type="RefSeq" id="XP_005255818.1">
    <property type="nucleotide sequence ID" value="XM_005255761.3"/>
</dbReference>
<dbReference type="RefSeq" id="XP_005255819.1">
    <property type="nucleotide sequence ID" value="XM_005255762.2"/>
</dbReference>
<dbReference type="RefSeq" id="XP_005255820.1">
    <property type="nucleotide sequence ID" value="XM_005255763.2"/>
</dbReference>
<dbReference type="RefSeq" id="XP_011521105.1">
    <property type="nucleotide sequence ID" value="XM_011522803.2"/>
</dbReference>
<dbReference type="RefSeq" id="XP_054235325.1">
    <molecule id="P55287-1"/>
    <property type="nucleotide sequence ID" value="XM_054379350.1"/>
</dbReference>
<dbReference type="RefSeq" id="XP_054235326.1">
    <molecule id="P55287-2"/>
    <property type="nucleotide sequence ID" value="XM_054379351.1"/>
</dbReference>
<dbReference type="SMR" id="P55287"/>
<dbReference type="BioGRID" id="107444">
    <property type="interactions" value="12"/>
</dbReference>
<dbReference type="CORUM" id="P55287"/>
<dbReference type="FunCoup" id="P55287">
    <property type="interactions" value="360"/>
</dbReference>
<dbReference type="IntAct" id="P55287">
    <property type="interactions" value="6"/>
</dbReference>
<dbReference type="MINT" id="P55287"/>
<dbReference type="STRING" id="9606.ENSP00000268603"/>
<dbReference type="DrugBank" id="DB00482">
    <property type="generic name" value="Celecoxib"/>
</dbReference>
<dbReference type="GlyCosmos" id="P55287">
    <property type="glycosylation" value="2 sites, No reported glycans"/>
</dbReference>
<dbReference type="GlyGen" id="P55287">
    <property type="glycosylation" value="5 sites, 3 N-linked glycans (2 sites), 1 O-linked glycan (1 site)"/>
</dbReference>
<dbReference type="iPTMnet" id="P55287"/>
<dbReference type="PhosphoSitePlus" id="P55287"/>
<dbReference type="BioMuta" id="CDH11"/>
<dbReference type="DMDM" id="146345381"/>
<dbReference type="jPOST" id="P55287"/>
<dbReference type="MassIVE" id="P55287"/>
<dbReference type="PaxDb" id="9606-ENSP00000268603"/>
<dbReference type="PeptideAtlas" id="P55287"/>
<dbReference type="ProteomicsDB" id="56837">
    <molecule id="P55287-1"/>
</dbReference>
<dbReference type="ProteomicsDB" id="56838">
    <molecule id="P55287-2"/>
</dbReference>
<dbReference type="ABCD" id="P55287">
    <property type="antibodies" value="16 sequenced antibodies"/>
</dbReference>
<dbReference type="Antibodypedia" id="4584">
    <property type="antibodies" value="846 antibodies from 38 providers"/>
</dbReference>
<dbReference type="DNASU" id="1009"/>
<dbReference type="Ensembl" id="ENST00000268603.9">
    <molecule id="P55287-1"/>
    <property type="protein sequence ID" value="ENSP00000268603.4"/>
    <property type="gene ID" value="ENSG00000140937.14"/>
</dbReference>
<dbReference type="Ensembl" id="ENST00000394156.7">
    <molecule id="P55287-2"/>
    <property type="protein sequence ID" value="ENSP00000377711.3"/>
    <property type="gene ID" value="ENSG00000140937.14"/>
</dbReference>
<dbReference type="GeneID" id="1009"/>
<dbReference type="KEGG" id="hsa:1009"/>
<dbReference type="MANE-Select" id="ENST00000268603.9">
    <property type="protein sequence ID" value="ENSP00000268603.4"/>
    <property type="RefSeq nucleotide sequence ID" value="NM_001797.4"/>
    <property type="RefSeq protein sequence ID" value="NP_001788.2"/>
</dbReference>
<dbReference type="UCSC" id="uc002eoi.4">
    <molecule id="P55287-1"/>
    <property type="organism name" value="human"/>
</dbReference>
<dbReference type="AGR" id="HGNC:1750"/>
<dbReference type="CTD" id="1009"/>
<dbReference type="DisGeNET" id="1009"/>
<dbReference type="GeneCards" id="CDH11"/>
<dbReference type="HGNC" id="HGNC:1750">
    <property type="gene designation" value="CDH11"/>
</dbReference>
<dbReference type="HPA" id="ENSG00000140937">
    <property type="expression patterns" value="Tissue enhanced (ovary, placenta)"/>
</dbReference>
<dbReference type="MalaCards" id="CDH11"/>
<dbReference type="MIM" id="211380">
    <property type="type" value="phenotype"/>
</dbReference>
<dbReference type="MIM" id="600023">
    <property type="type" value="gene"/>
</dbReference>
<dbReference type="MIM" id="619736">
    <property type="type" value="phenotype"/>
</dbReference>
<dbReference type="neXtProt" id="NX_P55287"/>
<dbReference type="OpenTargets" id="ENSG00000140937"/>
<dbReference type="Orphanet" id="1299">
    <property type="disease" value="Branchioskeletogenital syndrome"/>
</dbReference>
<dbReference type="PharmGKB" id="PA26284"/>
<dbReference type="VEuPathDB" id="HostDB:ENSG00000140937"/>
<dbReference type="eggNOG" id="KOG3594">
    <property type="taxonomic scope" value="Eukaryota"/>
</dbReference>
<dbReference type="GeneTree" id="ENSGT00940000153691"/>
<dbReference type="HOGENOM" id="CLU_005284_4_3_1"/>
<dbReference type="InParanoid" id="P55287"/>
<dbReference type="OMA" id="ERYFVIN"/>
<dbReference type="OrthoDB" id="8188793at2759"/>
<dbReference type="PAN-GO" id="P55287">
    <property type="GO annotations" value="9 GO annotations based on evolutionary models"/>
</dbReference>
<dbReference type="PhylomeDB" id="P55287"/>
<dbReference type="TreeFam" id="TF329887"/>
<dbReference type="PathwayCommons" id="P55287"/>
<dbReference type="Reactome" id="R-HSA-418990">
    <property type="pathway name" value="Adherens junctions interactions"/>
</dbReference>
<dbReference type="Reactome" id="R-HSA-9759811">
    <property type="pathway name" value="Regulation of CDH11 mRNA translation by microRNAs"/>
</dbReference>
<dbReference type="Reactome" id="R-HSA-9762292">
    <property type="pathway name" value="Regulation of CDH11 function"/>
</dbReference>
<dbReference type="Reactome" id="R-HSA-9833576">
    <property type="pathway name" value="CDH11 homotypic and heterotypic interactions"/>
</dbReference>
<dbReference type="SignaLink" id="P55287"/>
<dbReference type="SIGNOR" id="P55287"/>
<dbReference type="BioGRID-ORCS" id="1009">
    <property type="hits" value="16 hits in 1149 CRISPR screens"/>
</dbReference>
<dbReference type="ChiTaRS" id="CDH11">
    <property type="organism name" value="human"/>
</dbReference>
<dbReference type="GeneWiki" id="CDH11"/>
<dbReference type="GenomeRNAi" id="1009"/>
<dbReference type="Pharos" id="P55287">
    <property type="development level" value="Tbio"/>
</dbReference>
<dbReference type="PRO" id="PR:P55287"/>
<dbReference type="Proteomes" id="UP000005640">
    <property type="component" value="Chromosome 16"/>
</dbReference>
<dbReference type="RNAct" id="P55287">
    <property type="molecule type" value="protein"/>
</dbReference>
<dbReference type="Bgee" id="ENSG00000140937">
    <property type="expression patterns" value="Expressed in periodontal ligament and 195 other cell types or tissues"/>
</dbReference>
<dbReference type="ExpressionAtlas" id="P55287">
    <property type="expression patterns" value="baseline and differential"/>
</dbReference>
<dbReference type="GO" id="GO:0005912">
    <property type="term" value="C:adherens junction"/>
    <property type="evidence" value="ECO:0000318"/>
    <property type="project" value="GO_Central"/>
</dbReference>
<dbReference type="GO" id="GO:0016342">
    <property type="term" value="C:catenin complex"/>
    <property type="evidence" value="ECO:0000318"/>
    <property type="project" value="GO_Central"/>
</dbReference>
<dbReference type="GO" id="GO:0005737">
    <property type="term" value="C:cytoplasm"/>
    <property type="evidence" value="ECO:0007669"/>
    <property type="project" value="Ensembl"/>
</dbReference>
<dbReference type="GO" id="GO:0070062">
    <property type="term" value="C:extracellular exosome"/>
    <property type="evidence" value="ECO:0007005"/>
    <property type="project" value="UniProtKB"/>
</dbReference>
<dbReference type="GO" id="GO:0005576">
    <property type="term" value="C:extracellular region"/>
    <property type="evidence" value="ECO:0000304"/>
    <property type="project" value="Reactome"/>
</dbReference>
<dbReference type="GO" id="GO:0098978">
    <property type="term" value="C:glutamatergic synapse"/>
    <property type="evidence" value="ECO:0007669"/>
    <property type="project" value="Ensembl"/>
</dbReference>
<dbReference type="GO" id="GO:0005886">
    <property type="term" value="C:plasma membrane"/>
    <property type="evidence" value="ECO:0000304"/>
    <property type="project" value="Reactome"/>
</dbReference>
<dbReference type="GO" id="GO:0098685">
    <property type="term" value="C:Schaffer collateral - CA1 synapse"/>
    <property type="evidence" value="ECO:0007669"/>
    <property type="project" value="Ensembl"/>
</dbReference>
<dbReference type="GO" id="GO:0008013">
    <property type="term" value="F:beta-catenin binding"/>
    <property type="evidence" value="ECO:0000318"/>
    <property type="project" value="GO_Central"/>
</dbReference>
<dbReference type="GO" id="GO:0045296">
    <property type="term" value="F:cadherin binding"/>
    <property type="evidence" value="ECO:0000318"/>
    <property type="project" value="GO_Central"/>
</dbReference>
<dbReference type="GO" id="GO:0005509">
    <property type="term" value="F:calcium ion binding"/>
    <property type="evidence" value="ECO:0007669"/>
    <property type="project" value="InterPro"/>
</dbReference>
<dbReference type="GO" id="GO:0034332">
    <property type="term" value="P:adherens junction organization"/>
    <property type="evidence" value="ECO:0000318"/>
    <property type="project" value="GO_Central"/>
</dbReference>
<dbReference type="GO" id="GO:0003189">
    <property type="term" value="P:aortic valve formation"/>
    <property type="evidence" value="ECO:0000250"/>
    <property type="project" value="BHF-UCL"/>
</dbReference>
<dbReference type="GO" id="GO:0016339">
    <property type="term" value="P:calcium-dependent cell-cell adhesion via plasma membrane cell adhesion molecules"/>
    <property type="evidence" value="ECO:0000318"/>
    <property type="project" value="GO_Central"/>
</dbReference>
<dbReference type="GO" id="GO:0007155">
    <property type="term" value="P:cell adhesion"/>
    <property type="evidence" value="ECO:0000304"/>
    <property type="project" value="ProtInc"/>
</dbReference>
<dbReference type="GO" id="GO:0016477">
    <property type="term" value="P:cell migration"/>
    <property type="evidence" value="ECO:0000250"/>
    <property type="project" value="BHF-UCL"/>
</dbReference>
<dbReference type="GO" id="GO:0000902">
    <property type="term" value="P:cell morphogenesis"/>
    <property type="evidence" value="ECO:0000318"/>
    <property type="project" value="GO_Central"/>
</dbReference>
<dbReference type="GO" id="GO:0044331">
    <property type="term" value="P:cell-cell adhesion mediated by cadherin"/>
    <property type="evidence" value="ECO:0000318"/>
    <property type="project" value="GO_Central"/>
</dbReference>
<dbReference type="GO" id="GO:0007043">
    <property type="term" value="P:cell-cell junction assembly"/>
    <property type="evidence" value="ECO:0000318"/>
    <property type="project" value="GO_Central"/>
</dbReference>
<dbReference type="GO" id="GO:0031589">
    <property type="term" value="P:cell-substrate adhesion"/>
    <property type="evidence" value="ECO:0000315"/>
    <property type="project" value="UniProtKB"/>
</dbReference>
<dbReference type="GO" id="GO:0021957">
    <property type="term" value="P:corticospinal tract morphogenesis"/>
    <property type="evidence" value="ECO:0007669"/>
    <property type="project" value="Ensembl"/>
</dbReference>
<dbReference type="GO" id="GO:0048041">
    <property type="term" value="P:focal adhesion assembly"/>
    <property type="evidence" value="ECO:0000315"/>
    <property type="project" value="UniProtKB"/>
</dbReference>
<dbReference type="GO" id="GO:0007156">
    <property type="term" value="P:homophilic cell adhesion via plasma membrane adhesion molecules"/>
    <property type="evidence" value="ECO:0007669"/>
    <property type="project" value="InterPro"/>
</dbReference>
<dbReference type="GO" id="GO:0050804">
    <property type="term" value="P:modulation of chemical synaptic transmission"/>
    <property type="evidence" value="ECO:0007669"/>
    <property type="project" value="Ensembl"/>
</dbReference>
<dbReference type="GO" id="GO:0030336">
    <property type="term" value="P:negative regulation of cell migration"/>
    <property type="evidence" value="ECO:0000315"/>
    <property type="project" value="UniProtKB"/>
</dbReference>
<dbReference type="GO" id="GO:0001503">
    <property type="term" value="P:ossification"/>
    <property type="evidence" value="ECO:0000303"/>
    <property type="project" value="UniProtKB"/>
</dbReference>
<dbReference type="GO" id="GO:0001501">
    <property type="term" value="P:skeletal system development"/>
    <property type="evidence" value="ECO:0000304"/>
    <property type="project" value="ProtInc"/>
</dbReference>
<dbReference type="CDD" id="cd11304">
    <property type="entry name" value="Cadherin_repeat"/>
    <property type="match status" value="4"/>
</dbReference>
<dbReference type="FunFam" id="4.10.900.10:FF:000001">
    <property type="entry name" value="Cadherin 2"/>
    <property type="match status" value="1"/>
</dbReference>
<dbReference type="FunFam" id="2.60.40.60:FF:000008">
    <property type="entry name" value="Cadherin 24"/>
    <property type="match status" value="1"/>
</dbReference>
<dbReference type="FunFam" id="2.60.40.60:FF:000009">
    <property type="entry name" value="Cadherin 24"/>
    <property type="match status" value="1"/>
</dbReference>
<dbReference type="FunFam" id="2.60.40.60:FF:000012">
    <property type="entry name" value="Cadherin 24"/>
    <property type="match status" value="1"/>
</dbReference>
<dbReference type="FunFam" id="2.60.40.60:FF:000017">
    <property type="entry name" value="Cadherin 24"/>
    <property type="match status" value="1"/>
</dbReference>
<dbReference type="FunFam" id="2.60.40.60:FF:000014">
    <property type="entry name" value="Cadherin 8"/>
    <property type="match status" value="1"/>
</dbReference>
<dbReference type="Gene3D" id="2.60.40.60">
    <property type="entry name" value="Cadherins"/>
    <property type="match status" value="5"/>
</dbReference>
<dbReference type="Gene3D" id="4.10.900.10">
    <property type="entry name" value="TCF3-CBD (Catenin binding domain)"/>
    <property type="match status" value="1"/>
</dbReference>
<dbReference type="InterPro" id="IPR039808">
    <property type="entry name" value="Cadherin"/>
</dbReference>
<dbReference type="InterPro" id="IPR002126">
    <property type="entry name" value="Cadherin-like_dom"/>
</dbReference>
<dbReference type="InterPro" id="IPR015919">
    <property type="entry name" value="Cadherin-like_sf"/>
</dbReference>
<dbReference type="InterPro" id="IPR020894">
    <property type="entry name" value="Cadherin_CS"/>
</dbReference>
<dbReference type="InterPro" id="IPR000233">
    <property type="entry name" value="Cadherin_Y-type_LIR"/>
</dbReference>
<dbReference type="InterPro" id="IPR027397">
    <property type="entry name" value="Catenin-bd_sf"/>
</dbReference>
<dbReference type="PANTHER" id="PTHR24027:SF85">
    <property type="entry name" value="CADHERIN-11"/>
    <property type="match status" value="1"/>
</dbReference>
<dbReference type="PANTHER" id="PTHR24027">
    <property type="entry name" value="CADHERIN-23"/>
    <property type="match status" value="1"/>
</dbReference>
<dbReference type="Pfam" id="PF01049">
    <property type="entry name" value="CADH_Y-type_LIR"/>
    <property type="match status" value="1"/>
</dbReference>
<dbReference type="Pfam" id="PF00028">
    <property type="entry name" value="Cadherin"/>
    <property type="match status" value="4"/>
</dbReference>
<dbReference type="PRINTS" id="PR00205">
    <property type="entry name" value="CADHERIN"/>
</dbReference>
<dbReference type="SMART" id="SM00112">
    <property type="entry name" value="CA"/>
    <property type="match status" value="5"/>
</dbReference>
<dbReference type="SUPFAM" id="SSF49313">
    <property type="entry name" value="Cadherin-like"/>
    <property type="match status" value="5"/>
</dbReference>
<dbReference type="PROSITE" id="PS00232">
    <property type="entry name" value="CADHERIN_1"/>
    <property type="match status" value="3"/>
</dbReference>
<dbReference type="PROSITE" id="PS50268">
    <property type="entry name" value="CADHERIN_2"/>
    <property type="match status" value="5"/>
</dbReference>
<feature type="signal peptide" evidence="3">
    <location>
        <begin position="1"/>
        <end position="22"/>
    </location>
</feature>
<feature type="propeptide" id="PRO_0000003785" evidence="3">
    <location>
        <begin position="23"/>
        <end position="53"/>
    </location>
</feature>
<feature type="chain" id="PRO_0000003786" description="Cadherin-11">
    <location>
        <begin position="54"/>
        <end position="796"/>
    </location>
</feature>
<feature type="topological domain" description="Extracellular" evidence="3">
    <location>
        <begin position="54"/>
        <end position="617"/>
    </location>
</feature>
<feature type="transmembrane region" description="Helical" evidence="3">
    <location>
        <begin position="618"/>
        <end position="640"/>
    </location>
</feature>
<feature type="topological domain" description="Cytoplasmic" evidence="3">
    <location>
        <begin position="641"/>
        <end position="796"/>
    </location>
</feature>
<feature type="domain" description="Cadherin 1" evidence="4">
    <location>
        <begin position="54"/>
        <end position="159"/>
    </location>
</feature>
<feature type="domain" description="Cadherin 2" evidence="4">
    <location>
        <begin position="160"/>
        <end position="268"/>
    </location>
</feature>
<feature type="domain" description="Cadherin 3" evidence="4">
    <location>
        <begin position="269"/>
        <end position="383"/>
    </location>
</feature>
<feature type="domain" description="Cadherin 4" evidence="4">
    <location>
        <begin position="384"/>
        <end position="486"/>
    </location>
</feature>
<feature type="domain" description="Cadherin 5" evidence="4">
    <location>
        <begin position="487"/>
        <end position="612"/>
    </location>
</feature>
<feature type="modified residue" description="Phosphoserine" evidence="2">
    <location>
        <position position="788"/>
    </location>
</feature>
<feature type="modified residue" description="Phosphothreonine" evidence="2">
    <location>
        <position position="791"/>
    </location>
</feature>
<feature type="glycosylation site" description="N-linked (GlcNAc...) asparagine" evidence="3">
    <location>
        <position position="455"/>
    </location>
</feature>
<feature type="glycosylation site" description="N-linked (GlcNAc...) asparagine" evidence="3">
    <location>
        <position position="540"/>
    </location>
</feature>
<feature type="splice variant" id="VSP_000640" description="In isoform 2." evidence="10">
    <original>VIVVLFVTLRRQKKEPLIVFEEEDVRENIITYDDEGGGEEDTEAFDIATLQNPDGINGFIPR</original>
    <variation>GCPSLMEPPSPREDMRLLYLGFQLMLFSYVKVNRRFCLLGVFIKLPFLYVVATESPTTLTSL</variation>
    <location>
        <begin position="632"/>
        <end position="693"/>
    </location>
</feature>
<feature type="splice variant" id="VSP_000641" description="In isoform 2." evidence="10">
    <location>
        <begin position="694"/>
        <end position="796"/>
    </location>
</feature>
<feature type="sequence variant" id="VAR_086894" description="In TBHS2; results in loss of cell adhesion as shown by a cell-substrate adhesion assay; dbSNP:rs2142528709." evidence="8">
    <original>W</original>
    <variation>S</variation>
    <location>
        <position position="55"/>
    </location>
</feature>
<feature type="sequence variant" id="VAR_086895" description="In TBHS2; results in loss of cell adhesion as shown by a cell-substrate adhesion assay." evidence="8">
    <original>E</original>
    <variation>K</variation>
    <location>
        <position position="140"/>
    </location>
</feature>
<feature type="sequence variant" id="VAR_080481" description="In ESWS." evidence="7">
    <location>
        <begin position="232"/>
        <end position="796"/>
    </location>
</feature>
<feature type="sequence variant" id="VAR_031945" description="In dbSNP:rs35195.">
    <original>T</original>
    <variation>M</variation>
    <location>
        <position position="255"/>
    </location>
</feature>
<feature type="sequence variant" id="VAR_086896" description="In TBHS2; dbSNP:rs1000294766." evidence="8">
    <original>D</original>
    <variation>E</variation>
    <location>
        <position position="260"/>
    </location>
</feature>
<feature type="sequence variant" id="VAR_086897" description="In TBHS2; results in decreased cell adhesion as shown by a cell-substrate adhesion assay; dbSNP:rs2142492118." evidence="8">
    <original>D</original>
    <variation>N</variation>
    <location>
        <position position="260"/>
    </location>
</feature>
<feature type="sequence variant" id="VAR_086898" description="In TBHS2; results in decreased cell adhesion as shown by a cell-substrate adhesion assay." evidence="8">
    <original>N</original>
    <variation>I</variation>
    <location>
        <position position="262"/>
    </location>
</feature>
<feature type="sequence variant" id="VAR_086899" description="In TBHS2; dbSNP:rs1426094439." evidence="8">
    <original>P</original>
    <variation>L</variation>
    <location>
        <position position="266"/>
    </location>
</feature>
<feature type="sequence variant" id="VAR_031946" description="In dbSNP:rs1130821." evidence="9">
    <original>M</original>
    <variation>I</variation>
    <location>
        <position position="275"/>
    </location>
</feature>
<feature type="sequence variant" id="VAR_086900" description="In TBHS2; results in increased cell migration as shown by an in vitro wound closure assay using patient cells; dbSNP:rs2142481275." evidence="8">
    <original>E</original>
    <variation>Q</variation>
    <location>
        <position position="279"/>
    </location>
</feature>
<feature type="sequence variant" id="VAR_086901" description="In TBHS2; results in loss of cell adhesion as shown by a cell-substrate adhesion assay; dbSNP:rs2142480699." evidence="8">
    <original>G</original>
    <variation>W</variation>
    <location>
        <position position="327"/>
    </location>
</feature>
<feature type="sequence variant" id="VAR_031947" description="In dbSNP:rs35213." evidence="5 9">
    <original>S</original>
    <variation>A</variation>
    <location>
        <position position="373"/>
    </location>
</feature>
<feature type="sequence variant" id="VAR_086902" description="In TBHS2; dbSNP:rs2142459670." evidence="8">
    <original>V</original>
    <variation>E</variation>
    <location>
        <position position="374"/>
    </location>
</feature>
<feature type="sequence conflict" description="In Ref. 1; AAA35622 and 5; no nucleotide entry." evidence="11" ref="1 5">
    <original>SV</original>
    <variation>RL</variation>
    <location>
        <begin position="271"/>
        <end position="272"/>
    </location>
</feature>
<feature type="sequence conflict" description="In Ref. 1; AAA35622 and 5; no nucleotide entry." evidence="11" ref="1 5">
    <original>K</original>
    <variation>E</variation>
    <location>
        <position position="340"/>
    </location>
</feature>
<feature type="sequence conflict" description="In Ref. 1; AAA35622 and 5; no nucleotide entry." evidence="11" ref="1 5">
    <original>K</original>
    <variation>Q</variation>
    <location>
        <position position="471"/>
    </location>
</feature>
<reference key="1">
    <citation type="journal article" date="1994" name="Cell Adhes. Commun.">
        <title>Cloning of five human cadherins clarifies characteristic features of cadherin extracellular domain and provides further evidence for two structurally different types of cadherin.</title>
        <authorList>
            <person name="Tanihara H."/>
            <person name="Sano K."/>
            <person name="Heimark R.L."/>
            <person name="St John T."/>
            <person name="Suzuki S."/>
        </authorList>
    </citation>
    <scope>NUCLEOTIDE SEQUENCE [MRNA] (ISOFORM 1)</scope>
    <source>
        <tissue>Brain</tissue>
    </source>
</reference>
<reference key="2">
    <citation type="journal article" date="1994" name="J. Biol. Chem.">
        <title>Molecular cloning and characterization of OB-cadherin, a new member of cadherin family expressed in osteoblasts.</title>
        <authorList>
            <person name="Okazaki M."/>
            <person name="Takeshita S."/>
            <person name="Kawai S."/>
            <person name="Kikuno R."/>
            <person name="Tsujimura A."/>
            <person name="Kudo A."/>
            <person name="Amann E."/>
        </authorList>
    </citation>
    <scope>NUCLEOTIDE SEQUENCE [MRNA] (ISOFORMS 1 AND 2)</scope>
    <scope>VARIANTS ILE-275 AND ALA-373</scope>
    <source>
        <tissue>Osteosarcoma</tissue>
    </source>
</reference>
<reference key="3">
    <citation type="journal article" date="2004" name="Nat. Genet.">
        <title>Complete sequencing and characterization of 21,243 full-length human cDNAs.</title>
        <authorList>
            <person name="Ota T."/>
            <person name="Suzuki Y."/>
            <person name="Nishikawa T."/>
            <person name="Otsuki T."/>
            <person name="Sugiyama T."/>
            <person name="Irie R."/>
            <person name="Wakamatsu A."/>
            <person name="Hayashi K."/>
            <person name="Sato H."/>
            <person name="Nagai K."/>
            <person name="Kimura K."/>
            <person name="Makita H."/>
            <person name="Sekine M."/>
            <person name="Obayashi M."/>
            <person name="Nishi T."/>
            <person name="Shibahara T."/>
            <person name="Tanaka T."/>
            <person name="Ishii S."/>
            <person name="Yamamoto J."/>
            <person name="Saito K."/>
            <person name="Kawai Y."/>
            <person name="Isono Y."/>
            <person name="Nakamura Y."/>
            <person name="Nagahari K."/>
            <person name="Murakami K."/>
            <person name="Yasuda T."/>
            <person name="Iwayanagi T."/>
            <person name="Wagatsuma M."/>
            <person name="Shiratori A."/>
            <person name="Sudo H."/>
            <person name="Hosoiri T."/>
            <person name="Kaku Y."/>
            <person name="Kodaira H."/>
            <person name="Kondo H."/>
            <person name="Sugawara M."/>
            <person name="Takahashi M."/>
            <person name="Kanda K."/>
            <person name="Yokoi T."/>
            <person name="Furuya T."/>
            <person name="Kikkawa E."/>
            <person name="Omura Y."/>
            <person name="Abe K."/>
            <person name="Kamihara K."/>
            <person name="Katsuta N."/>
            <person name="Sato K."/>
            <person name="Tanikawa M."/>
            <person name="Yamazaki M."/>
            <person name="Ninomiya K."/>
            <person name="Ishibashi T."/>
            <person name="Yamashita H."/>
            <person name="Murakawa K."/>
            <person name="Fujimori K."/>
            <person name="Tanai H."/>
            <person name="Kimata M."/>
            <person name="Watanabe M."/>
            <person name="Hiraoka S."/>
            <person name="Chiba Y."/>
            <person name="Ishida S."/>
            <person name="Ono Y."/>
            <person name="Takiguchi S."/>
            <person name="Watanabe S."/>
            <person name="Yosida M."/>
            <person name="Hotuta T."/>
            <person name="Kusano J."/>
            <person name="Kanehori K."/>
            <person name="Takahashi-Fujii A."/>
            <person name="Hara H."/>
            <person name="Tanase T.-O."/>
            <person name="Nomura Y."/>
            <person name="Togiya S."/>
            <person name="Komai F."/>
            <person name="Hara R."/>
            <person name="Takeuchi K."/>
            <person name="Arita M."/>
            <person name="Imose N."/>
            <person name="Musashino K."/>
            <person name="Yuuki H."/>
            <person name="Oshima A."/>
            <person name="Sasaki N."/>
            <person name="Aotsuka S."/>
            <person name="Yoshikawa Y."/>
            <person name="Matsunawa H."/>
            <person name="Ichihara T."/>
            <person name="Shiohata N."/>
            <person name="Sano S."/>
            <person name="Moriya S."/>
            <person name="Momiyama H."/>
            <person name="Satoh N."/>
            <person name="Takami S."/>
            <person name="Terashima Y."/>
            <person name="Suzuki O."/>
            <person name="Nakagawa S."/>
            <person name="Senoh A."/>
            <person name="Mizoguchi H."/>
            <person name="Goto Y."/>
            <person name="Shimizu F."/>
            <person name="Wakebe H."/>
            <person name="Hishigaki H."/>
            <person name="Watanabe T."/>
            <person name="Sugiyama A."/>
            <person name="Takemoto M."/>
            <person name="Kawakami B."/>
            <person name="Yamazaki M."/>
            <person name="Watanabe K."/>
            <person name="Kumagai A."/>
            <person name="Itakura S."/>
            <person name="Fukuzumi Y."/>
            <person name="Fujimori Y."/>
            <person name="Komiyama M."/>
            <person name="Tashiro H."/>
            <person name="Tanigami A."/>
            <person name="Fujiwara T."/>
            <person name="Ono T."/>
            <person name="Yamada K."/>
            <person name="Fujii Y."/>
            <person name="Ozaki K."/>
            <person name="Hirao M."/>
            <person name="Ohmori Y."/>
            <person name="Kawabata A."/>
            <person name="Hikiji T."/>
            <person name="Kobatake N."/>
            <person name="Inagaki H."/>
            <person name="Ikema Y."/>
            <person name="Okamoto S."/>
            <person name="Okitani R."/>
            <person name="Kawakami T."/>
            <person name="Noguchi S."/>
            <person name="Itoh T."/>
            <person name="Shigeta K."/>
            <person name="Senba T."/>
            <person name="Matsumura K."/>
            <person name="Nakajima Y."/>
            <person name="Mizuno T."/>
            <person name="Morinaga M."/>
            <person name="Sasaki M."/>
            <person name="Togashi T."/>
            <person name="Oyama M."/>
            <person name="Hata H."/>
            <person name="Watanabe M."/>
            <person name="Komatsu T."/>
            <person name="Mizushima-Sugano J."/>
            <person name="Satoh T."/>
            <person name="Shirai Y."/>
            <person name="Takahashi Y."/>
            <person name="Nakagawa K."/>
            <person name="Okumura K."/>
            <person name="Nagase T."/>
            <person name="Nomura N."/>
            <person name="Kikuchi H."/>
            <person name="Masuho Y."/>
            <person name="Yamashita R."/>
            <person name="Nakai K."/>
            <person name="Yada T."/>
            <person name="Nakamura Y."/>
            <person name="Ohara O."/>
            <person name="Isogai T."/>
            <person name="Sugano S."/>
        </authorList>
    </citation>
    <scope>NUCLEOTIDE SEQUENCE [LARGE SCALE MRNA] (ISOFORM 1)</scope>
    <scope>VARIANT ALA-373</scope>
</reference>
<reference key="4">
    <citation type="journal article" date="2004" name="Nature">
        <title>The sequence and analysis of duplication-rich human chromosome 16.</title>
        <authorList>
            <person name="Martin J."/>
            <person name="Han C."/>
            <person name="Gordon L.A."/>
            <person name="Terry A."/>
            <person name="Prabhakar S."/>
            <person name="She X."/>
            <person name="Xie G."/>
            <person name="Hellsten U."/>
            <person name="Chan Y.M."/>
            <person name="Altherr M."/>
            <person name="Couronne O."/>
            <person name="Aerts A."/>
            <person name="Bajorek E."/>
            <person name="Black S."/>
            <person name="Blumer H."/>
            <person name="Branscomb E."/>
            <person name="Brown N.C."/>
            <person name="Bruno W.J."/>
            <person name="Buckingham J.M."/>
            <person name="Callen D.F."/>
            <person name="Campbell C.S."/>
            <person name="Campbell M.L."/>
            <person name="Campbell E.W."/>
            <person name="Caoile C."/>
            <person name="Challacombe J.F."/>
            <person name="Chasteen L.A."/>
            <person name="Chertkov O."/>
            <person name="Chi H.C."/>
            <person name="Christensen M."/>
            <person name="Clark L.M."/>
            <person name="Cohn J.D."/>
            <person name="Denys M."/>
            <person name="Detter J.C."/>
            <person name="Dickson M."/>
            <person name="Dimitrijevic-Bussod M."/>
            <person name="Escobar J."/>
            <person name="Fawcett J.J."/>
            <person name="Flowers D."/>
            <person name="Fotopulos D."/>
            <person name="Glavina T."/>
            <person name="Gomez M."/>
            <person name="Gonzales E."/>
            <person name="Goodstein D."/>
            <person name="Goodwin L.A."/>
            <person name="Grady D.L."/>
            <person name="Grigoriev I."/>
            <person name="Groza M."/>
            <person name="Hammon N."/>
            <person name="Hawkins T."/>
            <person name="Haydu L."/>
            <person name="Hildebrand C.E."/>
            <person name="Huang W."/>
            <person name="Israni S."/>
            <person name="Jett J."/>
            <person name="Jewett P.B."/>
            <person name="Kadner K."/>
            <person name="Kimball H."/>
            <person name="Kobayashi A."/>
            <person name="Krawczyk M.-C."/>
            <person name="Leyba T."/>
            <person name="Longmire J.L."/>
            <person name="Lopez F."/>
            <person name="Lou Y."/>
            <person name="Lowry S."/>
            <person name="Ludeman T."/>
            <person name="Manohar C.F."/>
            <person name="Mark G.A."/>
            <person name="McMurray K.L."/>
            <person name="Meincke L.J."/>
            <person name="Morgan J."/>
            <person name="Moyzis R.K."/>
            <person name="Mundt M.O."/>
            <person name="Munk A.C."/>
            <person name="Nandkeshwar R.D."/>
            <person name="Pitluck S."/>
            <person name="Pollard M."/>
            <person name="Predki P."/>
            <person name="Parson-Quintana B."/>
            <person name="Ramirez L."/>
            <person name="Rash S."/>
            <person name="Retterer J."/>
            <person name="Ricke D.O."/>
            <person name="Robinson D.L."/>
            <person name="Rodriguez A."/>
            <person name="Salamov A."/>
            <person name="Saunders E.H."/>
            <person name="Scott D."/>
            <person name="Shough T."/>
            <person name="Stallings R.L."/>
            <person name="Stalvey M."/>
            <person name="Sutherland R.D."/>
            <person name="Tapia R."/>
            <person name="Tesmer J.G."/>
            <person name="Thayer N."/>
            <person name="Thompson L.S."/>
            <person name="Tice H."/>
            <person name="Torney D.C."/>
            <person name="Tran-Gyamfi M."/>
            <person name="Tsai M."/>
            <person name="Ulanovsky L.E."/>
            <person name="Ustaszewska A."/>
            <person name="Vo N."/>
            <person name="White P.S."/>
            <person name="Williams A.L."/>
            <person name="Wills P.L."/>
            <person name="Wu J.-R."/>
            <person name="Wu K."/>
            <person name="Yang J."/>
            <person name="DeJong P."/>
            <person name="Bruce D."/>
            <person name="Doggett N.A."/>
            <person name="Deaven L."/>
            <person name="Schmutz J."/>
            <person name="Grimwood J."/>
            <person name="Richardson P."/>
            <person name="Rokhsar D.S."/>
            <person name="Eichler E.E."/>
            <person name="Gilna P."/>
            <person name="Lucas S.M."/>
            <person name="Myers R.M."/>
            <person name="Rubin E.M."/>
            <person name="Pennacchio L.A."/>
        </authorList>
    </citation>
    <scope>NUCLEOTIDE SEQUENCE [LARGE SCALE GENOMIC DNA]</scope>
</reference>
<reference key="5">
    <citation type="journal article" date="1991" name="Cell Regul.">
        <title>Diversity of the cadherin family: evidence for eight new cadherins in nervous tissue.</title>
        <authorList>
            <person name="Suzuki S."/>
            <person name="Sano K."/>
            <person name="Tanihara H."/>
        </authorList>
    </citation>
    <scope>NUCLEOTIDE SEQUENCE [MRNA] OF 269-796 (ISOFORM 1)</scope>
    <source>
        <tissue>Fetal brain</tissue>
    </source>
</reference>
<reference key="6">
    <citation type="submission" date="1998-04" db="EMBL/GenBank/DDBJ databases">
        <title>Alternative cadherin-11 transcripts encoding truncated adhesion molecules are detectable in both human cancer and normal cells.</title>
        <authorList>
            <person name="Kools P.F.J."/>
            <person name="Hogendoorn P.C.W."/>
            <person name="Bovee J.V.M.G."/>
            <person name="van Roy F."/>
        </authorList>
    </citation>
    <scope>NUCLEOTIDE SEQUENCE [GENOMIC DNA] OF 600-668</scope>
</reference>
<reference key="7">
    <citation type="journal article" date="2004" name="Cancer Res.">
        <title>USP6 (Tre2) fusion oncogenes in aneurysmal bone cyst.</title>
        <authorList>
            <person name="Oliveira A.M."/>
            <person name="Hsi B.L."/>
            <person name="Weremowicz S."/>
            <person name="Rosenberg A.E."/>
            <person name="Dal Cin P."/>
            <person name="Joseph N."/>
            <person name="Bridge J.A."/>
            <person name="Perez-Atayde A.R."/>
            <person name="Fletcher J.A."/>
        </authorList>
    </citation>
    <scope>CHROMOSOMAL TRANSLOCATION WITH USP6</scope>
</reference>
<reference key="8">
    <citation type="journal article" date="2017" name="Am. J. Med. Genet. A">
        <title>Homozygous indel mutation in CDH11 as the probable cause of Elsahy-Waters syndrome.</title>
        <authorList>
            <person name="Taskiran E.Z."/>
            <person name="Karaosmanoglu B."/>
            <person name="Kosukcu C."/>
            <person name="Dogan O.A."/>
            <person name="Taylan-Sekeroglu H."/>
            <person name="Simsek-Kiper P.O."/>
            <person name="Utine E.G."/>
            <person name="Boduroglu K."/>
            <person name="Alikasifoglu M."/>
        </authorList>
    </citation>
    <scope>INVOLVEMENT IN ESWS</scope>
</reference>
<reference key="9">
    <citation type="journal article" date="2018" name="Am. J. Med. Genet. A">
        <title>Elsahy-Waters syndrome is caused by biallelic mutations in CDH11.</title>
        <authorList>
            <person name="Harms F.L."/>
            <person name="Nampoothiri S."/>
            <person name="Anazi S."/>
            <person name="Yesodharan D."/>
            <person name="Alawi M."/>
            <person name="Kutsche K."/>
            <person name="Alkuraya F.S."/>
        </authorList>
    </citation>
    <scope>INVOLVEMENT IN ESWS</scope>
    <scope>VARIANT ESWS 232-TYR--SER-796 DEL</scope>
</reference>
<reference key="10">
    <citation type="journal article" date="2021" name="Hum. Genet.">
        <title>Pathogenic variants in CDH11 impair cell adhesion and cause Teebi hypertelorism syndrome.</title>
        <authorList>
            <person name="Li D."/>
            <person name="March M.E."/>
            <person name="Fortugno P."/>
            <person name="Cox L.L."/>
            <person name="Matsuoka L.S."/>
            <person name="Monetta R."/>
            <person name="Seiler C."/>
            <person name="Pyle L.C."/>
            <person name="Bedoukian E.C."/>
            <person name="Sanchez-Soler M.J."/>
            <person name="Caluseriu O."/>
            <person name="Grand K."/>
            <person name="Tam A."/>
            <person name="Aycinena A.R.P."/>
            <person name="Camerota L."/>
            <person name="Guo Y."/>
            <person name="Sleiman P."/>
            <person name="Callewaert B."/>
            <person name="Kumps C."/>
            <person name="Dheedene A."/>
            <person name="Buckley M."/>
            <person name="Kirk E.P."/>
            <person name="Turner A."/>
            <person name="Kamien B."/>
            <person name="Patel C."/>
            <person name="Wilson M."/>
            <person name="Roscioli T."/>
            <person name="Christodoulou J."/>
            <person name="Cox T.C."/>
            <person name="Zackai E.H."/>
            <person name="Brancati F."/>
            <person name="Hakonarson H."/>
            <person name="Bhoj E.J."/>
        </authorList>
    </citation>
    <scope>VARIANTS TBHS2 SER-55; LYS-140; ASN-260; GLU-260; ILE-262; LEU-266; GLN-279; TRP-327 AND GLU-374</scope>
    <scope>INVOLVEMENT IN TBHS2</scope>
    <scope>CHARACTERIZATION OF VARIANTS TBHS2 SER-55; LYS-140; ASN-260; ILE-262; GLN-279 AND TRP-327</scope>
    <scope>FUNCTION</scope>
    <scope>TISSUE SPECIFICITY</scope>
</reference>
<sequence length="796" mass="87965">MKENYCLQAALVCLGMLCHSHAFAPERRGHLRPSFHGHHEKGKEGQVLQRSKRGWVWNQFFVIEEYTGPDPVLVGRLHSDIDSGDGNIKYILSGEGAGTIFVIDDKSGNIHATKTLDREERAQYTLMAQAVDRDTNRPLEPPSEFIVKVQDINDNPPEFLHETYHANVPERSNVGTSVIQVTASDADDPTYGNSAKLVYSILEGQPYFSVEAQTGIIRTALPNMDREAKEEYHVVIQAKDMGGHMGGLSGTTKVTITLTDVNDNPPKFPQSVYQMSVSEAAVPGEEVGRVKAKDPDIGENGLVTYNIVDGDGMESFEITTDYETQEGVIKLKKPVDFETKRAYSLKVEAANVHIDPKFISNGPFKDTVTVKISVEDADEPPMFLAPSYIHEVQENAAAGTVVGRVHAKDPDAANSPIRYSIDRHTDLDRFFTINPEDGFIKTTKPLDREETAWLNITVFAAEIHNRHQEAKVPVAIRVLDVNDNAPKFAAPYEGFICESDQTKPLSNQPIVTISADDKDDTANGPRFIFSLPPEIIHNPNFTVRDNRDNTAGVYARRGGFSRQKQDLYLLPIVISDGGIPPMSSTNTLTIKVCGCDVNGALLSCNAEAYILNAGLSTGALIAILACIVILLVIVVLFVTLRRQKKEPLIVFEEEDVRENIITYDDEGGGEEDTEAFDIATLQNPDGINGFIPRKDIKPEYQYMPRPGLRPAPNSVDVDDFINTRIQEADNDPTAPPYDSIQIYGYEGRGSVAGSLSSLESATTDSDLDYDYLQNWGPRFKKLADLYGSKDTFDDDS</sequence>
<evidence type="ECO:0000250" key="1"/>
<evidence type="ECO:0000250" key="2">
    <source>
        <dbReference type="UniProtKB" id="P55288"/>
    </source>
</evidence>
<evidence type="ECO:0000255" key="3"/>
<evidence type="ECO:0000255" key="4">
    <source>
        <dbReference type="PROSITE-ProRule" id="PRU00043"/>
    </source>
</evidence>
<evidence type="ECO:0000269" key="5">
    <source>
    </source>
</evidence>
<evidence type="ECO:0000269" key="6">
    <source>
    </source>
</evidence>
<evidence type="ECO:0000269" key="7">
    <source>
    </source>
</evidence>
<evidence type="ECO:0000269" key="8">
    <source>
    </source>
</evidence>
<evidence type="ECO:0000269" key="9">
    <source>
    </source>
</evidence>
<evidence type="ECO:0000303" key="10">
    <source>
    </source>
</evidence>
<evidence type="ECO:0000305" key="11"/>
<name>CAD11_HUMAN</name>
<proteinExistence type="evidence at protein level"/>
<keyword id="KW-0025">Alternative splicing</keyword>
<keyword id="KW-0106">Calcium</keyword>
<keyword id="KW-0130">Cell adhesion</keyword>
<keyword id="KW-1003">Cell membrane</keyword>
<keyword id="KW-0160">Chromosomal rearrangement</keyword>
<keyword id="KW-0165">Cleavage on pair of basic residues</keyword>
<keyword id="KW-0209">Deafness</keyword>
<keyword id="KW-0225">Disease variant</keyword>
<keyword id="KW-0325">Glycoprotein</keyword>
<keyword id="KW-0991">Intellectual disability</keyword>
<keyword id="KW-0472">Membrane</keyword>
<keyword id="KW-0479">Metal-binding</keyword>
<keyword id="KW-0597">Phosphoprotein</keyword>
<keyword id="KW-1267">Proteomics identification</keyword>
<keyword id="KW-1185">Reference proteome</keyword>
<keyword id="KW-0677">Repeat</keyword>
<keyword id="KW-0732">Signal</keyword>
<keyword id="KW-0812">Transmembrane</keyword>
<keyword id="KW-1133">Transmembrane helix</keyword>